<keyword id="KW-0963">Cytoplasm</keyword>
<keyword id="KW-0227">DNA damage</keyword>
<keyword id="KW-0234">DNA repair</keyword>
<keyword id="KW-0235">DNA replication</keyword>
<keyword id="KW-0238">DNA-binding</keyword>
<keyword id="KW-0239">DNA-directed DNA polymerase</keyword>
<keyword id="KW-0460">Magnesium</keyword>
<keyword id="KW-0479">Metal-binding</keyword>
<keyword id="KW-0515">Mutator protein</keyword>
<keyword id="KW-0548">Nucleotidyltransferase</keyword>
<keyword id="KW-0808">Transferase</keyword>
<gene>
    <name evidence="1" type="primary">dinB</name>
    <name type="ordered locus">PputGB1_4215</name>
</gene>
<sequence>MSLRKIIHVDCDCFYAAIEMRDDPRLAGRPMAVGGSPDHRGVIATCNYEARAYGVRSAMSSRHALKLCPDLLIVKPRFEAYREASREIHGIFRDYTELIEPLSLDEAYLDVSDSQWYSGSATRIAEDIRRRVARTLHITVSAGVAPNKFLAKIASDWRKPNGLFVITPAEVEAFVAALPVARLHGVGKVTADKLTRLGIETCLELREWSRLALVREFGSFGERLWGLARGIDERAVHNDSRRQSVSVENTYDTDLPDLASCLARLPELLDSLNERIARMDNSYRPDKPFVKVKFHDFSQTTMEQAGAGRDLESYRQLLGQAFARGSKPVRLLGVGVRLRDLRGAHEQLELFPPK</sequence>
<dbReference type="EC" id="2.7.7.7" evidence="1"/>
<dbReference type="EMBL" id="CP000926">
    <property type="protein sequence ID" value="ABZ00104.1"/>
    <property type="molecule type" value="Genomic_DNA"/>
</dbReference>
<dbReference type="SMR" id="B0KTK6"/>
<dbReference type="KEGG" id="ppg:PputGB1_4215"/>
<dbReference type="eggNOG" id="COG0389">
    <property type="taxonomic scope" value="Bacteria"/>
</dbReference>
<dbReference type="HOGENOM" id="CLU_012348_1_2_6"/>
<dbReference type="Proteomes" id="UP000002157">
    <property type="component" value="Chromosome"/>
</dbReference>
<dbReference type="GO" id="GO:0005829">
    <property type="term" value="C:cytosol"/>
    <property type="evidence" value="ECO:0007669"/>
    <property type="project" value="TreeGrafter"/>
</dbReference>
<dbReference type="GO" id="GO:0003684">
    <property type="term" value="F:damaged DNA binding"/>
    <property type="evidence" value="ECO:0007669"/>
    <property type="project" value="InterPro"/>
</dbReference>
<dbReference type="GO" id="GO:0003887">
    <property type="term" value="F:DNA-directed DNA polymerase activity"/>
    <property type="evidence" value="ECO:0007669"/>
    <property type="project" value="UniProtKB-UniRule"/>
</dbReference>
<dbReference type="GO" id="GO:0000287">
    <property type="term" value="F:magnesium ion binding"/>
    <property type="evidence" value="ECO:0007669"/>
    <property type="project" value="UniProtKB-UniRule"/>
</dbReference>
<dbReference type="GO" id="GO:0006261">
    <property type="term" value="P:DNA-templated DNA replication"/>
    <property type="evidence" value="ECO:0007669"/>
    <property type="project" value="UniProtKB-UniRule"/>
</dbReference>
<dbReference type="GO" id="GO:0042276">
    <property type="term" value="P:error-prone translesion synthesis"/>
    <property type="evidence" value="ECO:0007669"/>
    <property type="project" value="TreeGrafter"/>
</dbReference>
<dbReference type="GO" id="GO:0009432">
    <property type="term" value="P:SOS response"/>
    <property type="evidence" value="ECO:0007669"/>
    <property type="project" value="TreeGrafter"/>
</dbReference>
<dbReference type="CDD" id="cd03586">
    <property type="entry name" value="PolY_Pol_IV_kappa"/>
    <property type="match status" value="1"/>
</dbReference>
<dbReference type="FunFam" id="1.10.150.20:FF:000019">
    <property type="entry name" value="DNA polymerase IV"/>
    <property type="match status" value="1"/>
</dbReference>
<dbReference type="FunFam" id="3.40.1170.60:FF:000001">
    <property type="entry name" value="DNA polymerase IV"/>
    <property type="match status" value="1"/>
</dbReference>
<dbReference type="Gene3D" id="3.30.70.270">
    <property type="match status" value="1"/>
</dbReference>
<dbReference type="Gene3D" id="3.40.1170.60">
    <property type="match status" value="1"/>
</dbReference>
<dbReference type="Gene3D" id="1.10.150.20">
    <property type="entry name" value="5' to 3' exonuclease, C-terminal subdomain"/>
    <property type="match status" value="1"/>
</dbReference>
<dbReference type="Gene3D" id="3.30.1490.100">
    <property type="entry name" value="DNA polymerase, Y-family, little finger domain"/>
    <property type="match status" value="1"/>
</dbReference>
<dbReference type="HAMAP" id="MF_01113">
    <property type="entry name" value="DNApol_IV"/>
    <property type="match status" value="1"/>
</dbReference>
<dbReference type="InterPro" id="IPR043502">
    <property type="entry name" value="DNA/RNA_pol_sf"/>
</dbReference>
<dbReference type="InterPro" id="IPR036775">
    <property type="entry name" value="DNA_pol_Y-fam_lit_finger_sf"/>
</dbReference>
<dbReference type="InterPro" id="IPR017961">
    <property type="entry name" value="DNA_pol_Y-fam_little_finger"/>
</dbReference>
<dbReference type="InterPro" id="IPR050116">
    <property type="entry name" value="DNA_polymerase-Y"/>
</dbReference>
<dbReference type="InterPro" id="IPR022880">
    <property type="entry name" value="DNApol_IV"/>
</dbReference>
<dbReference type="InterPro" id="IPR053848">
    <property type="entry name" value="IMS_HHH_1"/>
</dbReference>
<dbReference type="InterPro" id="IPR043128">
    <property type="entry name" value="Rev_trsase/Diguanyl_cyclase"/>
</dbReference>
<dbReference type="InterPro" id="IPR001126">
    <property type="entry name" value="UmuC"/>
</dbReference>
<dbReference type="NCBIfam" id="NF002677">
    <property type="entry name" value="PRK02406.1"/>
    <property type="match status" value="1"/>
</dbReference>
<dbReference type="PANTHER" id="PTHR11076:SF33">
    <property type="entry name" value="DNA POLYMERASE KAPPA"/>
    <property type="match status" value="1"/>
</dbReference>
<dbReference type="PANTHER" id="PTHR11076">
    <property type="entry name" value="DNA REPAIR POLYMERASE UMUC / TRANSFERASE FAMILY MEMBER"/>
    <property type="match status" value="1"/>
</dbReference>
<dbReference type="Pfam" id="PF00817">
    <property type="entry name" value="IMS"/>
    <property type="match status" value="1"/>
</dbReference>
<dbReference type="Pfam" id="PF11799">
    <property type="entry name" value="IMS_C"/>
    <property type="match status" value="1"/>
</dbReference>
<dbReference type="Pfam" id="PF21999">
    <property type="entry name" value="IMS_HHH_1"/>
    <property type="match status" value="1"/>
</dbReference>
<dbReference type="SUPFAM" id="SSF56672">
    <property type="entry name" value="DNA/RNA polymerases"/>
    <property type="match status" value="1"/>
</dbReference>
<dbReference type="SUPFAM" id="SSF100879">
    <property type="entry name" value="Lesion bypass DNA polymerase (Y-family), little finger domain"/>
    <property type="match status" value="1"/>
</dbReference>
<dbReference type="PROSITE" id="PS50173">
    <property type="entry name" value="UMUC"/>
    <property type="match status" value="1"/>
</dbReference>
<comment type="function">
    <text evidence="1">Poorly processive, error-prone DNA polymerase involved in untargeted mutagenesis. Copies undamaged DNA at stalled replication forks, which arise in vivo from mismatched or misaligned primer ends. These misaligned primers can be extended by PolIV. Exhibits no 3'-5' exonuclease (proofreading) activity. May be involved in translesional synthesis, in conjunction with the beta clamp from PolIII.</text>
</comment>
<comment type="catalytic activity">
    <reaction evidence="1">
        <text>DNA(n) + a 2'-deoxyribonucleoside 5'-triphosphate = DNA(n+1) + diphosphate</text>
        <dbReference type="Rhea" id="RHEA:22508"/>
        <dbReference type="Rhea" id="RHEA-COMP:17339"/>
        <dbReference type="Rhea" id="RHEA-COMP:17340"/>
        <dbReference type="ChEBI" id="CHEBI:33019"/>
        <dbReference type="ChEBI" id="CHEBI:61560"/>
        <dbReference type="ChEBI" id="CHEBI:173112"/>
        <dbReference type="EC" id="2.7.7.7"/>
    </reaction>
</comment>
<comment type="cofactor">
    <cofactor evidence="1">
        <name>Mg(2+)</name>
        <dbReference type="ChEBI" id="CHEBI:18420"/>
    </cofactor>
    <text evidence="1">Binds 2 magnesium ions per subunit.</text>
</comment>
<comment type="subunit">
    <text evidence="1">Monomer.</text>
</comment>
<comment type="subcellular location">
    <subcellularLocation>
        <location evidence="1">Cytoplasm</location>
    </subcellularLocation>
</comment>
<comment type="similarity">
    <text evidence="1">Belongs to the DNA polymerase type-Y family.</text>
</comment>
<organism>
    <name type="scientific">Pseudomonas putida (strain GB-1)</name>
    <dbReference type="NCBI Taxonomy" id="76869"/>
    <lineage>
        <taxon>Bacteria</taxon>
        <taxon>Pseudomonadati</taxon>
        <taxon>Pseudomonadota</taxon>
        <taxon>Gammaproteobacteria</taxon>
        <taxon>Pseudomonadales</taxon>
        <taxon>Pseudomonadaceae</taxon>
        <taxon>Pseudomonas</taxon>
    </lineage>
</organism>
<evidence type="ECO:0000255" key="1">
    <source>
        <dbReference type="HAMAP-Rule" id="MF_01113"/>
    </source>
</evidence>
<accession>B0KTK6</accession>
<name>DPO4_PSEPG</name>
<protein>
    <recommendedName>
        <fullName evidence="1">DNA polymerase IV</fullName>
        <shortName evidence="1">Pol IV</shortName>
        <ecNumber evidence="1">2.7.7.7</ecNumber>
    </recommendedName>
</protein>
<reference key="1">
    <citation type="submission" date="2008-01" db="EMBL/GenBank/DDBJ databases">
        <title>Complete sequence of Pseudomonas putida GB-1.</title>
        <authorList>
            <consortium name="US DOE Joint Genome Institute"/>
            <person name="Copeland A."/>
            <person name="Lucas S."/>
            <person name="Lapidus A."/>
            <person name="Barry K."/>
            <person name="Glavina del Rio T."/>
            <person name="Dalin E."/>
            <person name="Tice H."/>
            <person name="Pitluck S."/>
            <person name="Bruce D."/>
            <person name="Goodwin L."/>
            <person name="Chertkov O."/>
            <person name="Brettin T."/>
            <person name="Detter J.C."/>
            <person name="Han C."/>
            <person name="Kuske C.R."/>
            <person name="Schmutz J."/>
            <person name="Larimer F."/>
            <person name="Land M."/>
            <person name="Hauser L."/>
            <person name="Kyrpides N."/>
            <person name="Kim E."/>
            <person name="McCarthy J.K."/>
            <person name="Richardson P."/>
        </authorList>
    </citation>
    <scope>NUCLEOTIDE SEQUENCE [LARGE SCALE GENOMIC DNA]</scope>
    <source>
        <strain>GB-1</strain>
    </source>
</reference>
<feature type="chain" id="PRO_1000084918" description="DNA polymerase IV">
    <location>
        <begin position="1"/>
        <end position="354"/>
    </location>
</feature>
<feature type="domain" description="UmuC" evidence="1">
    <location>
        <begin position="6"/>
        <end position="187"/>
    </location>
</feature>
<feature type="active site" evidence="1">
    <location>
        <position position="106"/>
    </location>
</feature>
<feature type="binding site" evidence="1">
    <location>
        <position position="10"/>
    </location>
    <ligand>
        <name>Mg(2+)</name>
        <dbReference type="ChEBI" id="CHEBI:18420"/>
    </ligand>
</feature>
<feature type="binding site" evidence="1">
    <location>
        <position position="105"/>
    </location>
    <ligand>
        <name>Mg(2+)</name>
        <dbReference type="ChEBI" id="CHEBI:18420"/>
    </ligand>
</feature>
<feature type="site" description="Substrate discrimination" evidence="1">
    <location>
        <position position="15"/>
    </location>
</feature>
<proteinExistence type="inferred from homology"/>